<reference key="1">
    <citation type="journal article" date="2009" name="Appl. Environ. Microbiol.">
        <title>Three genomes from the phylum Acidobacteria provide insight into the lifestyles of these microorganisms in soils.</title>
        <authorList>
            <person name="Ward N.L."/>
            <person name="Challacombe J.F."/>
            <person name="Janssen P.H."/>
            <person name="Henrissat B."/>
            <person name="Coutinho P.M."/>
            <person name="Wu M."/>
            <person name="Xie G."/>
            <person name="Haft D.H."/>
            <person name="Sait M."/>
            <person name="Badger J."/>
            <person name="Barabote R.D."/>
            <person name="Bradley B."/>
            <person name="Brettin T.S."/>
            <person name="Brinkac L.M."/>
            <person name="Bruce D."/>
            <person name="Creasy T."/>
            <person name="Daugherty S.C."/>
            <person name="Davidsen T.M."/>
            <person name="DeBoy R.T."/>
            <person name="Detter J.C."/>
            <person name="Dodson R.J."/>
            <person name="Durkin A.S."/>
            <person name="Ganapathy A."/>
            <person name="Gwinn-Giglio M."/>
            <person name="Han C.S."/>
            <person name="Khouri H."/>
            <person name="Kiss H."/>
            <person name="Kothari S.P."/>
            <person name="Madupu R."/>
            <person name="Nelson K.E."/>
            <person name="Nelson W.C."/>
            <person name="Paulsen I."/>
            <person name="Penn K."/>
            <person name="Ren Q."/>
            <person name="Rosovitz M.J."/>
            <person name="Selengut J.D."/>
            <person name="Shrivastava S."/>
            <person name="Sullivan S.A."/>
            <person name="Tapia R."/>
            <person name="Thompson L.S."/>
            <person name="Watkins K.L."/>
            <person name="Yang Q."/>
            <person name="Yu C."/>
            <person name="Zafar N."/>
            <person name="Zhou L."/>
            <person name="Kuske C.R."/>
        </authorList>
    </citation>
    <scope>NUCLEOTIDE SEQUENCE [LARGE SCALE GENOMIC DNA]</scope>
    <source>
        <strain>Ellin6076</strain>
    </source>
</reference>
<keyword id="KW-0030">Aminoacyl-tRNA synthetase</keyword>
<keyword id="KW-0067">ATP-binding</keyword>
<keyword id="KW-0963">Cytoplasm</keyword>
<keyword id="KW-0436">Ligase</keyword>
<keyword id="KW-0547">Nucleotide-binding</keyword>
<keyword id="KW-0648">Protein biosynthesis</keyword>
<feature type="chain" id="PRO_1000076289" description="Histidine--tRNA ligase">
    <location>
        <begin position="1"/>
        <end position="414"/>
    </location>
</feature>
<sequence>MIKAVKGTRDLLPPSTEVWNRVEQVARAIFRAYNYHEIRTPIFEETQLFSRGVGTETDIVTKEMYTFEDRDGSSLTLRPENTASVIRAYIEHRLDQRPGVQKLYYIGPMFRRERPQKGRYRQFFQIGAEAIGSESPVVDAEVIELVVEILKGVGLSGFKLLINSVGDHNCRPQYVEKLKAELKDKAAGMCGDCQRRAETNPLRVLDCKVEADQPIIDALPSIVDYLCEPCRAHFEAVKSYLTDRGIEYEVRPRMVRGLDYYMRTTFEVVHGALGAQNSVLGGGRYDGLAESLGSRVHAPGIGFSIGEDRLVMSVEGDQPASQLDLCIAPLGEAAVRHAAILARDFRRSGHSVELVEGKLKRAMELANKFGARYTLIIGDNEIAAGRYALKNMATGEQVELTRDEIAARLDAASN</sequence>
<evidence type="ECO:0000255" key="1">
    <source>
        <dbReference type="HAMAP-Rule" id="MF_00127"/>
    </source>
</evidence>
<organism>
    <name type="scientific">Solibacter usitatus (strain Ellin6076)</name>
    <dbReference type="NCBI Taxonomy" id="234267"/>
    <lineage>
        <taxon>Bacteria</taxon>
        <taxon>Pseudomonadati</taxon>
        <taxon>Acidobacteriota</taxon>
        <taxon>Terriglobia</taxon>
        <taxon>Bryobacterales</taxon>
        <taxon>Solibacteraceae</taxon>
        <taxon>Candidatus Solibacter</taxon>
    </lineage>
</organism>
<accession>Q028M4</accession>
<dbReference type="EC" id="6.1.1.21" evidence="1"/>
<dbReference type="EMBL" id="CP000473">
    <property type="protein sequence ID" value="ABJ82528.1"/>
    <property type="molecule type" value="Genomic_DNA"/>
</dbReference>
<dbReference type="SMR" id="Q028M4"/>
<dbReference type="FunCoup" id="Q028M4">
    <property type="interactions" value="586"/>
</dbReference>
<dbReference type="STRING" id="234267.Acid_1537"/>
<dbReference type="KEGG" id="sus:Acid_1537"/>
<dbReference type="eggNOG" id="COG0124">
    <property type="taxonomic scope" value="Bacteria"/>
</dbReference>
<dbReference type="HOGENOM" id="CLU_025113_1_1_0"/>
<dbReference type="InParanoid" id="Q028M4"/>
<dbReference type="OrthoDB" id="9800814at2"/>
<dbReference type="GO" id="GO:0005737">
    <property type="term" value="C:cytoplasm"/>
    <property type="evidence" value="ECO:0007669"/>
    <property type="project" value="UniProtKB-SubCell"/>
</dbReference>
<dbReference type="GO" id="GO:0005524">
    <property type="term" value="F:ATP binding"/>
    <property type="evidence" value="ECO:0007669"/>
    <property type="project" value="UniProtKB-UniRule"/>
</dbReference>
<dbReference type="GO" id="GO:0004821">
    <property type="term" value="F:histidine-tRNA ligase activity"/>
    <property type="evidence" value="ECO:0007669"/>
    <property type="project" value="UniProtKB-UniRule"/>
</dbReference>
<dbReference type="GO" id="GO:0006427">
    <property type="term" value="P:histidyl-tRNA aminoacylation"/>
    <property type="evidence" value="ECO:0007669"/>
    <property type="project" value="UniProtKB-UniRule"/>
</dbReference>
<dbReference type="CDD" id="cd00773">
    <property type="entry name" value="HisRS-like_core"/>
    <property type="match status" value="1"/>
</dbReference>
<dbReference type="CDD" id="cd00859">
    <property type="entry name" value="HisRS_anticodon"/>
    <property type="match status" value="1"/>
</dbReference>
<dbReference type="Gene3D" id="3.40.50.800">
    <property type="entry name" value="Anticodon-binding domain"/>
    <property type="match status" value="1"/>
</dbReference>
<dbReference type="Gene3D" id="3.30.930.10">
    <property type="entry name" value="Bira Bifunctional Protein, Domain 2"/>
    <property type="match status" value="1"/>
</dbReference>
<dbReference type="HAMAP" id="MF_00127">
    <property type="entry name" value="His_tRNA_synth"/>
    <property type="match status" value="1"/>
</dbReference>
<dbReference type="InterPro" id="IPR006195">
    <property type="entry name" value="aa-tRNA-synth_II"/>
</dbReference>
<dbReference type="InterPro" id="IPR045864">
    <property type="entry name" value="aa-tRNA-synth_II/BPL/LPL"/>
</dbReference>
<dbReference type="InterPro" id="IPR004154">
    <property type="entry name" value="Anticodon-bd"/>
</dbReference>
<dbReference type="InterPro" id="IPR036621">
    <property type="entry name" value="Anticodon-bd_dom_sf"/>
</dbReference>
<dbReference type="InterPro" id="IPR015807">
    <property type="entry name" value="His-tRNA-ligase"/>
</dbReference>
<dbReference type="InterPro" id="IPR041715">
    <property type="entry name" value="HisRS-like_core"/>
</dbReference>
<dbReference type="InterPro" id="IPR004516">
    <property type="entry name" value="HisRS/HisZ"/>
</dbReference>
<dbReference type="InterPro" id="IPR033656">
    <property type="entry name" value="HisRS_anticodon"/>
</dbReference>
<dbReference type="NCBIfam" id="TIGR00442">
    <property type="entry name" value="hisS"/>
    <property type="match status" value="1"/>
</dbReference>
<dbReference type="PANTHER" id="PTHR43707:SF1">
    <property type="entry name" value="HISTIDINE--TRNA LIGASE, MITOCHONDRIAL-RELATED"/>
    <property type="match status" value="1"/>
</dbReference>
<dbReference type="PANTHER" id="PTHR43707">
    <property type="entry name" value="HISTIDYL-TRNA SYNTHETASE"/>
    <property type="match status" value="1"/>
</dbReference>
<dbReference type="Pfam" id="PF03129">
    <property type="entry name" value="HGTP_anticodon"/>
    <property type="match status" value="1"/>
</dbReference>
<dbReference type="Pfam" id="PF13393">
    <property type="entry name" value="tRNA-synt_His"/>
    <property type="match status" value="1"/>
</dbReference>
<dbReference type="PIRSF" id="PIRSF001549">
    <property type="entry name" value="His-tRNA_synth"/>
    <property type="match status" value="1"/>
</dbReference>
<dbReference type="SUPFAM" id="SSF52954">
    <property type="entry name" value="Class II aaRS ABD-related"/>
    <property type="match status" value="1"/>
</dbReference>
<dbReference type="SUPFAM" id="SSF55681">
    <property type="entry name" value="Class II aaRS and biotin synthetases"/>
    <property type="match status" value="1"/>
</dbReference>
<dbReference type="PROSITE" id="PS50862">
    <property type="entry name" value="AA_TRNA_LIGASE_II"/>
    <property type="match status" value="1"/>
</dbReference>
<gene>
    <name evidence="1" type="primary">hisS</name>
    <name type="ordered locus">Acid_1537</name>
</gene>
<name>SYH_SOLUE</name>
<protein>
    <recommendedName>
        <fullName evidence="1">Histidine--tRNA ligase</fullName>
        <ecNumber evidence="1">6.1.1.21</ecNumber>
    </recommendedName>
    <alternativeName>
        <fullName evidence="1">Histidyl-tRNA synthetase</fullName>
        <shortName evidence="1">HisRS</shortName>
    </alternativeName>
</protein>
<proteinExistence type="inferred from homology"/>
<comment type="catalytic activity">
    <reaction evidence="1">
        <text>tRNA(His) + L-histidine + ATP = L-histidyl-tRNA(His) + AMP + diphosphate + H(+)</text>
        <dbReference type="Rhea" id="RHEA:17313"/>
        <dbReference type="Rhea" id="RHEA-COMP:9665"/>
        <dbReference type="Rhea" id="RHEA-COMP:9689"/>
        <dbReference type="ChEBI" id="CHEBI:15378"/>
        <dbReference type="ChEBI" id="CHEBI:30616"/>
        <dbReference type="ChEBI" id="CHEBI:33019"/>
        <dbReference type="ChEBI" id="CHEBI:57595"/>
        <dbReference type="ChEBI" id="CHEBI:78442"/>
        <dbReference type="ChEBI" id="CHEBI:78527"/>
        <dbReference type="ChEBI" id="CHEBI:456215"/>
        <dbReference type="EC" id="6.1.1.21"/>
    </reaction>
</comment>
<comment type="subunit">
    <text evidence="1">Homodimer.</text>
</comment>
<comment type="subcellular location">
    <subcellularLocation>
        <location evidence="1">Cytoplasm</location>
    </subcellularLocation>
</comment>
<comment type="similarity">
    <text evidence="1">Belongs to the class-II aminoacyl-tRNA synthetase family.</text>
</comment>